<feature type="signal peptide" evidence="1">
    <location>
        <begin position="1"/>
        <end position="21"/>
    </location>
</feature>
<feature type="chain" id="PRO_0000024105" description="Phosphatidylinositol 4-phosphate 5-kinase 1">
    <location>
        <begin position="22"/>
        <end position="801"/>
    </location>
</feature>
<feature type="repeat" description="MORN 1">
    <location>
        <begin position="41"/>
        <end position="63"/>
    </location>
</feature>
<feature type="repeat" description="MORN 2">
    <location>
        <begin position="64"/>
        <end position="86"/>
    </location>
</feature>
<feature type="repeat" description="MORN 3">
    <location>
        <begin position="87"/>
        <end position="109"/>
    </location>
</feature>
<feature type="repeat" description="MORN 4">
    <location>
        <begin position="110"/>
        <end position="132"/>
    </location>
</feature>
<feature type="repeat" description="MORN 5">
    <location>
        <begin position="133"/>
        <end position="155"/>
    </location>
</feature>
<feature type="repeat" description="MORN 6">
    <location>
        <begin position="156"/>
        <end position="178"/>
    </location>
</feature>
<feature type="repeat" description="MORN 7">
    <location>
        <begin position="182"/>
        <end position="201"/>
    </location>
</feature>
<feature type="repeat" description="MORN 8">
    <location>
        <begin position="202"/>
        <end position="223"/>
    </location>
</feature>
<feature type="domain" description="PIPK" evidence="2">
    <location>
        <begin position="366"/>
        <end position="797"/>
    </location>
</feature>
<feature type="splice variant" id="VSP_015135" description="In isoform 2." evidence="4">
    <location>
        <begin position="494"/>
        <end position="502"/>
    </location>
</feature>
<sequence length="801" mass="90680">MPGLHVVSFLVVLLLQLRSSGMHLVASELFWGNTLPNGDIYVGSFDGLVPHGPGKYMWTDGALYDGEWDKSKMTGRGLIQWPSGASYEGDFRGGFIDGAGTFKGVDGSVYKGSWRMNKKHGMGTMVYSNSDTYEGFWNEGLPDEFGKYTWADGNVYIGRWKSGKMNGSGVMQWINGDTLDCNWLNGLAHGKGYCKYASGACYIGTWDRGLKDGHGTFYQPGSKIPCNLEVSDCLTSHDGTSASSSSNEKITIGLLFLLQKLCKNWRLRRFLHRPRRISNGTTPVFDDNSGSHLCQDVSSKSFSADDQCLQDSEVDKDSVYEREYVQGVLIMEQPKNEDSRMSESGIAQENNWEKQAKGPMETIYKGHRSYYLMLNLQLGIRYTVGKITPVPLREVRSNDFGPRARIKMYFPCEGSQYTPPHYSVDFFWKDYCPMVFRNLREMFHIDAADYMMSICGGDSLKELSSPGKSGSIFYLSQDERFVIKTLRKTELKIGLMKYVLQILLKMLPKYYNHVKAYDNTLITKFFGVHRITLKPGRKVRFVVMGNMFCTELRIHRKYDLKGSTQGRSTKKQNINENTTLKDLDLSYVFHVDKPWREALFRQIALDCMFLESQSIIDYSMLLGIHFRAPNHLKRITSCQNALESTGISAETECSVALHHEETISSKGFLLVAADEPGPAVRGSHIRGSMVRAAEGGYEEVDLVLPGTGRFRVQLGVNMPARARKVQEDVNVEVENRDTIEEYDVVLYLGIIDILQEYNVSKRVEHAVKSLKFDPLSISAVDPNLYSRRFISFLEKVFPEQD</sequence>
<protein>
    <recommendedName>
        <fullName>Phosphatidylinositol 4-phosphate 5-kinase 1</fullName>
        <ecNumber>2.7.1.68</ecNumber>
    </recommendedName>
    <alternativeName>
        <fullName>1-phosphatidylinositol 4-phosphate kinase</fullName>
    </alternativeName>
    <alternativeName>
        <fullName>Diphosphoinositide kinase</fullName>
    </alternativeName>
    <alternativeName>
        <fullName>PIP5K</fullName>
    </alternativeName>
    <alternativeName>
        <fullName>PtdIns(4)P-5-kinase</fullName>
    </alternativeName>
</protein>
<organism>
    <name type="scientific">Oryza sativa subsp. japonica</name>
    <name type="common">Rice</name>
    <dbReference type="NCBI Taxonomy" id="39947"/>
    <lineage>
        <taxon>Eukaryota</taxon>
        <taxon>Viridiplantae</taxon>
        <taxon>Streptophyta</taxon>
        <taxon>Embryophyta</taxon>
        <taxon>Tracheophyta</taxon>
        <taxon>Spermatophyta</taxon>
        <taxon>Magnoliopsida</taxon>
        <taxon>Liliopsida</taxon>
        <taxon>Poales</taxon>
        <taxon>Poaceae</taxon>
        <taxon>BOP clade</taxon>
        <taxon>Oryzoideae</taxon>
        <taxon>Oryzeae</taxon>
        <taxon>Oryzinae</taxon>
        <taxon>Oryza</taxon>
        <taxon>Oryza sativa</taxon>
    </lineage>
</organism>
<reference key="1">
    <citation type="journal article" date="2004" name="Plant Mol. Biol.">
        <title>OsPIPK 1, a rice phosphatidylinositol monophosphate kinase, regulates rice heading by modifying the expression of floral induction genes.</title>
        <authorList>
            <person name="Ma H."/>
            <person name="Xu S.-P."/>
            <person name="Luo D."/>
            <person name="Xu Z.-H."/>
            <person name="Xue H.-W."/>
        </authorList>
    </citation>
    <scope>NUCLEOTIDE SEQUENCE [MRNA] (ISOFORM 2)</scope>
    <scope>NUCLEOTIDE SEQUENCE [MRNA] OF 112-801 (ISOFORM 1)</scope>
    <scope>FUNCTION</scope>
    <scope>TISSUE SPECIFICITY</scope>
    <scope>INDUCTION</scope>
    <source>
        <strain>cv. Zhonghua 11</strain>
    </source>
</reference>
<reference key="2">
    <citation type="journal article" date="2005" name="Genome Res.">
        <title>Sequence, annotation, and analysis of synteny between rice chromosome 3 and diverged grass species.</title>
        <authorList>
            <consortium name="The rice chromosome 3 sequencing consortium"/>
            <person name="Buell C.R."/>
            <person name="Yuan Q."/>
            <person name="Ouyang S."/>
            <person name="Liu J."/>
            <person name="Zhu W."/>
            <person name="Wang A."/>
            <person name="Maiti R."/>
            <person name="Haas B."/>
            <person name="Wortman J."/>
            <person name="Pertea M."/>
            <person name="Jones K.M."/>
            <person name="Kim M."/>
            <person name="Overton L."/>
            <person name="Tsitrin T."/>
            <person name="Fadrosh D."/>
            <person name="Bera J."/>
            <person name="Weaver B."/>
            <person name="Jin S."/>
            <person name="Johri S."/>
            <person name="Reardon M."/>
            <person name="Webb K."/>
            <person name="Hill J."/>
            <person name="Moffat K."/>
            <person name="Tallon L."/>
            <person name="Van Aken S."/>
            <person name="Lewis M."/>
            <person name="Utterback T."/>
            <person name="Feldblyum T."/>
            <person name="Zismann V."/>
            <person name="Iobst S."/>
            <person name="Hsiao J."/>
            <person name="de Vazeille A.R."/>
            <person name="Salzberg S.L."/>
            <person name="White O."/>
            <person name="Fraser C.M."/>
            <person name="Yu Y."/>
            <person name="Kim H."/>
            <person name="Rambo T."/>
            <person name="Currie J."/>
            <person name="Collura K."/>
            <person name="Kernodle-Thompson S."/>
            <person name="Wei F."/>
            <person name="Kudrna K."/>
            <person name="Ammiraju J.S.S."/>
            <person name="Luo M."/>
            <person name="Goicoechea J.L."/>
            <person name="Wing R.A."/>
            <person name="Henry D."/>
            <person name="Oates R."/>
            <person name="Palmer M."/>
            <person name="Pries G."/>
            <person name="Saski C."/>
            <person name="Simmons J."/>
            <person name="Soderlund C."/>
            <person name="Nelson W."/>
            <person name="de la Bastide M."/>
            <person name="Spiegel L."/>
            <person name="Nascimento L."/>
            <person name="Huang E."/>
            <person name="Preston R."/>
            <person name="Zutavern T."/>
            <person name="Palmer L."/>
            <person name="O'Shaughnessy A."/>
            <person name="Dike S."/>
            <person name="McCombie W.R."/>
            <person name="Minx P."/>
            <person name="Cordum H."/>
            <person name="Wilson R."/>
            <person name="Jin W."/>
            <person name="Lee H.R."/>
            <person name="Jiang J."/>
            <person name="Jackson S."/>
        </authorList>
    </citation>
    <scope>NUCLEOTIDE SEQUENCE [LARGE SCALE GENOMIC DNA]</scope>
    <source>
        <strain>cv. Nipponbare</strain>
    </source>
</reference>
<reference key="3">
    <citation type="journal article" date="2005" name="Nature">
        <title>The map-based sequence of the rice genome.</title>
        <authorList>
            <consortium name="International rice genome sequencing project (IRGSP)"/>
        </authorList>
    </citation>
    <scope>NUCLEOTIDE SEQUENCE [LARGE SCALE GENOMIC DNA]</scope>
    <source>
        <strain>cv. Nipponbare</strain>
    </source>
</reference>
<reference key="4">
    <citation type="journal article" date="2008" name="Nucleic Acids Res.">
        <title>The rice annotation project database (RAP-DB): 2008 update.</title>
        <authorList>
            <consortium name="The rice annotation project (RAP)"/>
        </authorList>
    </citation>
    <scope>GENOME REANNOTATION</scope>
    <source>
        <strain>cv. Nipponbare</strain>
    </source>
</reference>
<reference key="5">
    <citation type="journal article" date="2013" name="Rice">
        <title>Improvement of the Oryza sativa Nipponbare reference genome using next generation sequence and optical map data.</title>
        <authorList>
            <person name="Kawahara Y."/>
            <person name="de la Bastide M."/>
            <person name="Hamilton J.P."/>
            <person name="Kanamori H."/>
            <person name="McCombie W.R."/>
            <person name="Ouyang S."/>
            <person name="Schwartz D.C."/>
            <person name="Tanaka T."/>
            <person name="Wu J."/>
            <person name="Zhou S."/>
            <person name="Childs K.L."/>
            <person name="Davidson R.M."/>
            <person name="Lin H."/>
            <person name="Quesada-Ocampo L."/>
            <person name="Vaillancourt B."/>
            <person name="Sakai H."/>
            <person name="Lee S.S."/>
            <person name="Kim J."/>
            <person name="Numa H."/>
            <person name="Itoh T."/>
            <person name="Buell C.R."/>
            <person name="Matsumoto T."/>
        </authorList>
    </citation>
    <scope>GENOME REANNOTATION</scope>
    <source>
        <strain>cv. Nipponbare</strain>
    </source>
</reference>
<name>PI5K1_ORYSJ</name>
<dbReference type="EC" id="2.7.1.68"/>
<dbReference type="EMBL" id="AJ439082">
    <property type="protein sequence ID" value="CAD27794.1"/>
    <property type="molecule type" value="mRNA"/>
</dbReference>
<dbReference type="EMBL" id="AJ544688">
    <property type="protein sequence ID" value="CAD67588.1"/>
    <property type="molecule type" value="mRNA"/>
</dbReference>
<dbReference type="EMBL" id="AC091670">
    <property type="protein sequence ID" value="AAX95508.1"/>
    <property type="molecule type" value="Genomic_DNA"/>
</dbReference>
<dbReference type="EMBL" id="DP000009">
    <property type="protein sequence ID" value="ABF98412.1"/>
    <property type="molecule type" value="Genomic_DNA"/>
</dbReference>
<dbReference type="EMBL" id="AP008209">
    <property type="protein sequence ID" value="BAF12919.1"/>
    <property type="molecule type" value="Genomic_DNA"/>
</dbReference>
<dbReference type="EMBL" id="AP014959">
    <property type="status" value="NOT_ANNOTATED_CDS"/>
    <property type="molecule type" value="Genomic_DNA"/>
</dbReference>
<dbReference type="SMR" id="Q6EX42"/>
<dbReference type="FunCoup" id="Q6EX42">
    <property type="interactions" value="2061"/>
</dbReference>
<dbReference type="STRING" id="39947.Q6EX42"/>
<dbReference type="PaxDb" id="39947-Q6EX42"/>
<dbReference type="KEGG" id="dosa:Os03g0701800"/>
<dbReference type="eggNOG" id="KOG0229">
    <property type="taxonomic scope" value="Eukaryota"/>
</dbReference>
<dbReference type="HOGENOM" id="CLU_971767_0_0_1"/>
<dbReference type="InParanoid" id="Q6EX42"/>
<dbReference type="Proteomes" id="UP000000763">
    <property type="component" value="Chromosome 3"/>
</dbReference>
<dbReference type="Proteomes" id="UP000059680">
    <property type="component" value="Chromosome 3"/>
</dbReference>
<dbReference type="GO" id="GO:0005886">
    <property type="term" value="C:plasma membrane"/>
    <property type="evidence" value="ECO:0000318"/>
    <property type="project" value="GO_Central"/>
</dbReference>
<dbReference type="GO" id="GO:0016308">
    <property type="term" value="F:1-phosphatidylinositol-4-phosphate 5-kinase activity"/>
    <property type="evidence" value="ECO:0000318"/>
    <property type="project" value="GO_Central"/>
</dbReference>
<dbReference type="GO" id="GO:0005524">
    <property type="term" value="F:ATP binding"/>
    <property type="evidence" value="ECO:0007669"/>
    <property type="project" value="UniProtKB-KW"/>
</dbReference>
<dbReference type="GO" id="GO:0030154">
    <property type="term" value="P:cell differentiation"/>
    <property type="evidence" value="ECO:0007669"/>
    <property type="project" value="UniProtKB-KW"/>
</dbReference>
<dbReference type="GO" id="GO:0009908">
    <property type="term" value="P:flower development"/>
    <property type="evidence" value="ECO:0007669"/>
    <property type="project" value="UniProtKB-KW"/>
</dbReference>
<dbReference type="GO" id="GO:0046854">
    <property type="term" value="P:phosphatidylinositol phosphate biosynthetic process"/>
    <property type="evidence" value="ECO:0000318"/>
    <property type="project" value="GO_Central"/>
</dbReference>
<dbReference type="CDD" id="cd17302">
    <property type="entry name" value="PIPKc_AtPIP5K_like"/>
    <property type="match status" value="1"/>
</dbReference>
<dbReference type="Gene3D" id="3.30.810.10">
    <property type="entry name" value="2-Layer Sandwich"/>
    <property type="match status" value="1"/>
</dbReference>
<dbReference type="Gene3D" id="2.20.110.10">
    <property type="entry name" value="Histone H3 K4-specific methyltransferase SET7/9 N-terminal domain"/>
    <property type="match status" value="3"/>
</dbReference>
<dbReference type="Gene3D" id="3.30.800.10">
    <property type="entry name" value="Phosphatidylinositol Phosphate Kinase II Beta"/>
    <property type="match status" value="1"/>
</dbReference>
<dbReference type="InterPro" id="IPR003409">
    <property type="entry name" value="MORN"/>
</dbReference>
<dbReference type="InterPro" id="IPR017163">
    <property type="entry name" value="PIno-4-P-5_kinase_pln"/>
</dbReference>
<dbReference type="InterPro" id="IPR027483">
    <property type="entry name" value="PInositol-4-P-4/5-kinase_C_sf"/>
</dbReference>
<dbReference type="InterPro" id="IPR002498">
    <property type="entry name" value="PInositol-4-P-4/5-kinase_core"/>
</dbReference>
<dbReference type="InterPro" id="IPR027484">
    <property type="entry name" value="PInositol-4-P-5-kinase_N"/>
</dbReference>
<dbReference type="InterPro" id="IPR023610">
    <property type="entry name" value="PInositol-4/5-P-5/4-kinase"/>
</dbReference>
<dbReference type="PANTHER" id="PTHR23086:SF25">
    <property type="entry name" value="PHOSPHATIDYLINOSITOL 4-PHOSPHATE 5-KINASE 8"/>
    <property type="match status" value="1"/>
</dbReference>
<dbReference type="PANTHER" id="PTHR23086">
    <property type="entry name" value="PHOSPHATIDYLINOSITOL-4-PHOSPHATE 5-KINASE"/>
    <property type="match status" value="1"/>
</dbReference>
<dbReference type="Pfam" id="PF02493">
    <property type="entry name" value="MORN"/>
    <property type="match status" value="8"/>
</dbReference>
<dbReference type="Pfam" id="PF01504">
    <property type="entry name" value="PIP5K"/>
    <property type="match status" value="1"/>
</dbReference>
<dbReference type="PIRSF" id="PIRSF037274">
    <property type="entry name" value="PIP5K_plant_prd"/>
    <property type="match status" value="1"/>
</dbReference>
<dbReference type="SMART" id="SM00698">
    <property type="entry name" value="MORN"/>
    <property type="match status" value="8"/>
</dbReference>
<dbReference type="SMART" id="SM00330">
    <property type="entry name" value="PIPKc"/>
    <property type="match status" value="1"/>
</dbReference>
<dbReference type="SUPFAM" id="SSF82185">
    <property type="entry name" value="Histone H3 K4-specific methyltransferase SET7/9 N-terminal domain"/>
    <property type="match status" value="2"/>
</dbReference>
<dbReference type="SUPFAM" id="SSF56104">
    <property type="entry name" value="SAICAR synthase-like"/>
    <property type="match status" value="1"/>
</dbReference>
<dbReference type="PROSITE" id="PS51455">
    <property type="entry name" value="PIPK"/>
    <property type="match status" value="1"/>
</dbReference>
<gene>
    <name type="primary">PIPK1</name>
    <name evidence="7" type="ordered locus">Os03g0701800</name>
    <name evidence="6" type="ordered locus">LOC_Os03g49510</name>
</gene>
<keyword id="KW-0025">Alternative splicing</keyword>
<keyword id="KW-0067">ATP-binding</keyword>
<keyword id="KW-0217">Developmental protein</keyword>
<keyword id="KW-0221">Differentiation</keyword>
<keyword id="KW-0287">Flowering</keyword>
<keyword id="KW-0418">Kinase</keyword>
<keyword id="KW-0547">Nucleotide-binding</keyword>
<keyword id="KW-1185">Reference proteome</keyword>
<keyword id="KW-0677">Repeat</keyword>
<keyword id="KW-0732">Signal</keyword>
<keyword id="KW-0808">Transferase</keyword>
<accession>Q6EX42</accession>
<accession>Q10ED0</accession>
<accession>Q70Z13</accession>
<comment type="function">
    <text evidence="3">Involved in flowering. May suppress floral initiation by modifying the expression of genes related to floral induction.</text>
</comment>
<comment type="catalytic activity">
    <reaction>
        <text>a 1,2-diacyl-sn-glycero-3-phospho-(1D-myo-inositol 4-phosphate) + ATP = a 1,2-diacyl-sn-glycero-3-phospho-(1D-myo-inositol-4,5-bisphosphate) + ADP + H(+)</text>
        <dbReference type="Rhea" id="RHEA:14425"/>
        <dbReference type="ChEBI" id="CHEBI:15378"/>
        <dbReference type="ChEBI" id="CHEBI:30616"/>
        <dbReference type="ChEBI" id="CHEBI:58178"/>
        <dbReference type="ChEBI" id="CHEBI:58456"/>
        <dbReference type="ChEBI" id="CHEBI:456216"/>
        <dbReference type="EC" id="2.7.1.68"/>
    </reaction>
</comment>
<comment type="alternative products">
    <event type="alternative splicing"/>
    <isoform>
        <id>Q6EX42-1</id>
        <name>1</name>
        <sequence type="displayed"/>
    </isoform>
    <isoform>
        <id>Q6EX42-2</id>
        <name>2</name>
        <sequence type="described" ref="VSP_015135"/>
    </isoform>
</comment>
<comment type="tissue specificity">
    <text evidence="3">Expressed in young seedlings, shoot and seeds, and at lower level in roots, stem and leaf.</text>
</comment>
<comment type="induction">
    <text evidence="3">By auxin, abscisic acid, cytokinins, gibberellic acid, Ca(2+), methyl jasmonate and salicylic acid.</text>
</comment>
<comment type="miscellaneous">
    <text>Transgenic plants suppressing PIPK1 show earlier heading (7 to 14 days earlier), delayed leaf development (a common phenotype observed with earlier flowering), and greater expression of floral induction genes.</text>
</comment>
<comment type="miscellaneous">
    <molecule>Isoform 2</molecule>
    <text evidence="5">May be due to intron retention.</text>
</comment>
<proteinExistence type="evidence at transcript level"/>
<evidence type="ECO:0000255" key="1"/>
<evidence type="ECO:0000255" key="2">
    <source>
        <dbReference type="PROSITE-ProRule" id="PRU00781"/>
    </source>
</evidence>
<evidence type="ECO:0000269" key="3">
    <source>
    </source>
</evidence>
<evidence type="ECO:0000303" key="4">
    <source>
    </source>
</evidence>
<evidence type="ECO:0000305" key="5"/>
<evidence type="ECO:0000312" key="6">
    <source>
        <dbReference type="EMBL" id="ABF98412.1"/>
    </source>
</evidence>
<evidence type="ECO:0000312" key="7">
    <source>
        <dbReference type="EMBL" id="BAF12919.1"/>
    </source>
</evidence>